<keyword id="KW-0963">Cytoplasm</keyword>
<keyword id="KW-0396">Initiation factor</keyword>
<keyword id="KW-0648">Protein biosynthesis</keyword>
<keyword id="KW-0694">RNA-binding</keyword>
<keyword id="KW-0699">rRNA-binding</keyword>
<accession>Q1BRW9</accession>
<protein>
    <recommendedName>
        <fullName evidence="1">Translation initiation factor IF-1 1</fullName>
    </recommendedName>
</protein>
<reference key="1">
    <citation type="submission" date="2006-05" db="EMBL/GenBank/DDBJ databases">
        <title>Complete sequence of chromosome 1 of Burkholderia cenocepacia AU 1054.</title>
        <authorList>
            <consortium name="US DOE Joint Genome Institute"/>
            <person name="Copeland A."/>
            <person name="Lucas S."/>
            <person name="Lapidus A."/>
            <person name="Barry K."/>
            <person name="Detter J.C."/>
            <person name="Glavina del Rio T."/>
            <person name="Hammon N."/>
            <person name="Israni S."/>
            <person name="Dalin E."/>
            <person name="Tice H."/>
            <person name="Pitluck S."/>
            <person name="Chain P."/>
            <person name="Malfatti S."/>
            <person name="Shin M."/>
            <person name="Vergez L."/>
            <person name="Schmutz J."/>
            <person name="Larimer F."/>
            <person name="Land M."/>
            <person name="Hauser L."/>
            <person name="Kyrpides N."/>
            <person name="Lykidis A."/>
            <person name="LiPuma J.J."/>
            <person name="Konstantinidis K."/>
            <person name="Tiedje J.M."/>
            <person name="Richardson P."/>
        </authorList>
    </citation>
    <scope>NUCLEOTIDE SEQUENCE [LARGE SCALE GENOMIC DNA]</scope>
    <source>
        <strain>AU 1054</strain>
    </source>
</reference>
<name>IF11_BURO1</name>
<comment type="function">
    <text evidence="1">One of the essential components for the initiation of protein synthesis. Stabilizes the binding of IF-2 and IF-3 on the 30S subunit to which N-formylmethionyl-tRNA(fMet) subsequently binds. Helps modulate mRNA selection, yielding the 30S pre-initiation complex (PIC). Upon addition of the 50S ribosomal subunit IF-1, IF-2 and IF-3 are released leaving the mature 70S translation initiation complex.</text>
</comment>
<comment type="subunit">
    <text evidence="1">Component of the 30S ribosomal translation pre-initiation complex which assembles on the 30S ribosome in the order IF-2 and IF-3, IF-1 and N-formylmethionyl-tRNA(fMet); mRNA recruitment can occur at any time during PIC assembly.</text>
</comment>
<comment type="subcellular location">
    <subcellularLocation>
        <location evidence="1">Cytoplasm</location>
    </subcellularLocation>
</comment>
<comment type="similarity">
    <text evidence="1">Belongs to the IF-1 family.</text>
</comment>
<organism>
    <name type="scientific">Burkholderia orbicola (strain AU 1054)</name>
    <dbReference type="NCBI Taxonomy" id="331271"/>
    <lineage>
        <taxon>Bacteria</taxon>
        <taxon>Pseudomonadati</taxon>
        <taxon>Pseudomonadota</taxon>
        <taxon>Betaproteobacteria</taxon>
        <taxon>Burkholderiales</taxon>
        <taxon>Burkholderiaceae</taxon>
        <taxon>Burkholderia</taxon>
        <taxon>Burkholderia cepacia complex</taxon>
        <taxon>Burkholderia orbicola</taxon>
    </lineage>
</organism>
<dbReference type="EMBL" id="CP000378">
    <property type="protein sequence ID" value="ABF77636.1"/>
    <property type="molecule type" value="Genomic_DNA"/>
</dbReference>
<dbReference type="SMR" id="Q1BRW9"/>
<dbReference type="HOGENOM" id="CLU_151267_1_0_4"/>
<dbReference type="GO" id="GO:0005829">
    <property type="term" value="C:cytosol"/>
    <property type="evidence" value="ECO:0007669"/>
    <property type="project" value="TreeGrafter"/>
</dbReference>
<dbReference type="GO" id="GO:0043022">
    <property type="term" value="F:ribosome binding"/>
    <property type="evidence" value="ECO:0007669"/>
    <property type="project" value="UniProtKB-UniRule"/>
</dbReference>
<dbReference type="GO" id="GO:0019843">
    <property type="term" value="F:rRNA binding"/>
    <property type="evidence" value="ECO:0007669"/>
    <property type="project" value="UniProtKB-UniRule"/>
</dbReference>
<dbReference type="GO" id="GO:0003743">
    <property type="term" value="F:translation initiation factor activity"/>
    <property type="evidence" value="ECO:0007669"/>
    <property type="project" value="UniProtKB-UniRule"/>
</dbReference>
<dbReference type="CDD" id="cd04451">
    <property type="entry name" value="S1_IF1"/>
    <property type="match status" value="1"/>
</dbReference>
<dbReference type="FunFam" id="2.40.50.140:FF:000002">
    <property type="entry name" value="Translation initiation factor IF-1"/>
    <property type="match status" value="1"/>
</dbReference>
<dbReference type="Gene3D" id="2.40.50.140">
    <property type="entry name" value="Nucleic acid-binding proteins"/>
    <property type="match status" value="1"/>
</dbReference>
<dbReference type="HAMAP" id="MF_00075">
    <property type="entry name" value="IF_1"/>
    <property type="match status" value="1"/>
</dbReference>
<dbReference type="InterPro" id="IPR012340">
    <property type="entry name" value="NA-bd_OB-fold"/>
</dbReference>
<dbReference type="InterPro" id="IPR006196">
    <property type="entry name" value="RNA-binding_domain_S1_IF1"/>
</dbReference>
<dbReference type="InterPro" id="IPR003029">
    <property type="entry name" value="S1_domain"/>
</dbReference>
<dbReference type="InterPro" id="IPR004368">
    <property type="entry name" value="TIF_IF1"/>
</dbReference>
<dbReference type="NCBIfam" id="TIGR00008">
    <property type="entry name" value="infA"/>
    <property type="match status" value="1"/>
</dbReference>
<dbReference type="PANTHER" id="PTHR33370">
    <property type="entry name" value="TRANSLATION INITIATION FACTOR IF-1, CHLOROPLASTIC"/>
    <property type="match status" value="1"/>
</dbReference>
<dbReference type="PANTHER" id="PTHR33370:SF1">
    <property type="entry name" value="TRANSLATION INITIATION FACTOR IF-1, CHLOROPLASTIC"/>
    <property type="match status" value="1"/>
</dbReference>
<dbReference type="Pfam" id="PF01176">
    <property type="entry name" value="eIF-1a"/>
    <property type="match status" value="1"/>
</dbReference>
<dbReference type="SMART" id="SM00316">
    <property type="entry name" value="S1"/>
    <property type="match status" value="1"/>
</dbReference>
<dbReference type="SUPFAM" id="SSF50249">
    <property type="entry name" value="Nucleic acid-binding proteins"/>
    <property type="match status" value="1"/>
</dbReference>
<dbReference type="PROSITE" id="PS50832">
    <property type="entry name" value="S1_IF1_TYPE"/>
    <property type="match status" value="1"/>
</dbReference>
<gene>
    <name evidence="1" type="primary">infA1</name>
    <name type="ordered locus">Bcen_2738</name>
</gene>
<feature type="chain" id="PRO_0000263770" description="Translation initiation factor IF-1 1">
    <location>
        <begin position="1"/>
        <end position="72"/>
    </location>
</feature>
<feature type="domain" description="S1-like" evidence="1">
    <location>
        <begin position="1"/>
        <end position="72"/>
    </location>
</feature>
<proteinExistence type="inferred from homology"/>
<sequence length="72" mass="8218">MAKDDVIQMQGEVIENLPNATFRVKLENGHVVLGHISGKMRMHYIRILPGDKVTVELTPYDLSRARIVFRAK</sequence>
<evidence type="ECO:0000255" key="1">
    <source>
        <dbReference type="HAMAP-Rule" id="MF_00075"/>
    </source>
</evidence>